<keyword id="KW-0238">DNA-binding</keyword>
<keyword id="KW-1017">Isopeptide bond</keyword>
<keyword id="KW-0479">Metal-binding</keyword>
<keyword id="KW-0539">Nucleus</keyword>
<keyword id="KW-1185">Reference proteome</keyword>
<keyword id="KW-0677">Repeat</keyword>
<keyword id="KW-0804">Transcription</keyword>
<keyword id="KW-0805">Transcription regulation</keyword>
<keyword id="KW-0832">Ubl conjugation</keyword>
<keyword id="KW-0862">Zinc</keyword>
<keyword id="KW-0863">Zinc-finger</keyword>
<comment type="function">
    <text>May be involved in transcriptional regulation.</text>
</comment>
<comment type="subcellular location">
    <subcellularLocation>
        <location evidence="5">Nucleus</location>
    </subcellularLocation>
</comment>
<gene>
    <name type="primary">Zbtb9</name>
</gene>
<dbReference type="EMBL" id="AK014458">
    <property type="protein sequence ID" value="BAB29365.1"/>
    <property type="molecule type" value="mRNA"/>
</dbReference>
<dbReference type="EMBL" id="AK030262">
    <property type="protein sequence ID" value="BAC26866.1"/>
    <property type="molecule type" value="mRNA"/>
</dbReference>
<dbReference type="EMBL" id="AK154850">
    <property type="protein sequence ID" value="BAE32876.1"/>
    <property type="molecule type" value="mRNA"/>
</dbReference>
<dbReference type="EMBL" id="BC049933">
    <property type="protein sequence ID" value="AAH49933.1"/>
    <property type="molecule type" value="mRNA"/>
</dbReference>
<dbReference type="EMBL" id="BC054732">
    <property type="status" value="NOT_ANNOTATED_CDS"/>
    <property type="molecule type" value="mRNA"/>
</dbReference>
<dbReference type="EMBL" id="BC060527">
    <property type="status" value="NOT_ANNOTATED_CDS"/>
    <property type="molecule type" value="mRNA"/>
</dbReference>
<dbReference type="CCDS" id="CCDS37520.1"/>
<dbReference type="RefSeq" id="NP_001005916.1">
    <property type="nucleotide sequence ID" value="NM_001005916.2"/>
</dbReference>
<dbReference type="SMR" id="Q8CDC7"/>
<dbReference type="BioGRID" id="243089">
    <property type="interactions" value="10"/>
</dbReference>
<dbReference type="FunCoup" id="Q8CDC7">
    <property type="interactions" value="399"/>
</dbReference>
<dbReference type="IntAct" id="Q8CDC7">
    <property type="interactions" value="5"/>
</dbReference>
<dbReference type="STRING" id="10090.ENSMUSP00000112778"/>
<dbReference type="GlyGen" id="Q8CDC7">
    <property type="glycosylation" value="1 site"/>
</dbReference>
<dbReference type="PhosphoSitePlus" id="Q8CDC7"/>
<dbReference type="jPOST" id="Q8CDC7"/>
<dbReference type="PaxDb" id="10090-ENSMUSP00000112778"/>
<dbReference type="PeptideAtlas" id="Q8CDC7"/>
<dbReference type="ProteomicsDB" id="275056"/>
<dbReference type="DNASU" id="474156"/>
<dbReference type="Ensembl" id="ENSMUST00000120016.3">
    <property type="protein sequence ID" value="ENSMUSP00000112778.2"/>
    <property type="gene ID" value="ENSMUSG00000079605.6"/>
</dbReference>
<dbReference type="Ensembl" id="ENSMUST00000133257.9">
    <property type="protein sequence ID" value="ENSMUSP00000115777.3"/>
    <property type="gene ID" value="ENSMUSG00000117819.2"/>
</dbReference>
<dbReference type="Ensembl" id="ENSMUST00000237633.2">
    <property type="protein sequence ID" value="ENSMUSP00000157541.2"/>
    <property type="gene ID" value="ENSMUSG00000079605.6"/>
</dbReference>
<dbReference type="GeneID" id="474156"/>
<dbReference type="KEGG" id="mmu:474156"/>
<dbReference type="UCSC" id="uc008bfb.1">
    <property type="organism name" value="mouse"/>
</dbReference>
<dbReference type="AGR" id="MGI:1918022"/>
<dbReference type="AGR" id="MGI:6303071"/>
<dbReference type="CTD" id="221504"/>
<dbReference type="MGI" id="MGI:1918022">
    <property type="gene designation" value="Zbtb9"/>
</dbReference>
<dbReference type="VEuPathDB" id="HostDB:ENSMUSG00000079605"/>
<dbReference type="VEuPathDB" id="HostDB:ENSMUSG00000117819"/>
<dbReference type="eggNOG" id="KOG1721">
    <property type="taxonomic scope" value="Eukaryota"/>
</dbReference>
<dbReference type="GeneTree" id="ENSGT00940000162408"/>
<dbReference type="HOGENOM" id="CLU_029118_2_0_1"/>
<dbReference type="InParanoid" id="Q8CDC7"/>
<dbReference type="OMA" id="PGGWCIR"/>
<dbReference type="OrthoDB" id="6601382at2759"/>
<dbReference type="PhylomeDB" id="Q8CDC7"/>
<dbReference type="BioGRID-ORCS" id="474156">
    <property type="hits" value="3 hits in 47 CRISPR screens"/>
</dbReference>
<dbReference type="ChiTaRS" id="Zbtb9">
    <property type="organism name" value="mouse"/>
</dbReference>
<dbReference type="PRO" id="PR:Q8CDC7"/>
<dbReference type="Proteomes" id="UP000000589">
    <property type="component" value="Chromosome 17"/>
</dbReference>
<dbReference type="RNAct" id="Q8CDC7">
    <property type="molecule type" value="protein"/>
</dbReference>
<dbReference type="Bgee" id="ENSMUSG00000079605">
    <property type="expression patterns" value="Expressed in spermatocyte and 76 other cell types or tissues"/>
</dbReference>
<dbReference type="GO" id="GO:0005634">
    <property type="term" value="C:nucleus"/>
    <property type="evidence" value="ECO:0007669"/>
    <property type="project" value="UniProtKB-SubCell"/>
</dbReference>
<dbReference type="GO" id="GO:0003677">
    <property type="term" value="F:DNA binding"/>
    <property type="evidence" value="ECO:0007669"/>
    <property type="project" value="UniProtKB-KW"/>
</dbReference>
<dbReference type="GO" id="GO:0042802">
    <property type="term" value="F:identical protein binding"/>
    <property type="evidence" value="ECO:0007669"/>
    <property type="project" value="Ensembl"/>
</dbReference>
<dbReference type="GO" id="GO:0008270">
    <property type="term" value="F:zinc ion binding"/>
    <property type="evidence" value="ECO:0007669"/>
    <property type="project" value="UniProtKB-KW"/>
</dbReference>
<dbReference type="FunFam" id="3.30.160.60:FF:000145">
    <property type="entry name" value="Zinc finger protein 574"/>
    <property type="match status" value="1"/>
</dbReference>
<dbReference type="Gene3D" id="3.30.160.60">
    <property type="entry name" value="Classic Zinc Finger"/>
    <property type="match status" value="1"/>
</dbReference>
<dbReference type="Gene3D" id="3.30.710.10">
    <property type="entry name" value="Potassium Channel Kv1.1, Chain A"/>
    <property type="match status" value="1"/>
</dbReference>
<dbReference type="InterPro" id="IPR000210">
    <property type="entry name" value="BTB/POZ_dom"/>
</dbReference>
<dbReference type="InterPro" id="IPR011333">
    <property type="entry name" value="SKP1/BTB/POZ_sf"/>
</dbReference>
<dbReference type="InterPro" id="IPR036236">
    <property type="entry name" value="Znf_C2H2_sf"/>
</dbReference>
<dbReference type="InterPro" id="IPR013087">
    <property type="entry name" value="Znf_C2H2_type"/>
</dbReference>
<dbReference type="InterPro" id="IPR050457">
    <property type="entry name" value="ZnFinger_BTB_dom_contain"/>
</dbReference>
<dbReference type="PANTHER" id="PTHR46105">
    <property type="entry name" value="AGAP004733-PA"/>
    <property type="match status" value="1"/>
</dbReference>
<dbReference type="PANTHER" id="PTHR46105:SF13">
    <property type="entry name" value="ZINC FINGER AND BTB DOMAIN-CONTAINING PROTEIN 9"/>
    <property type="match status" value="1"/>
</dbReference>
<dbReference type="Pfam" id="PF00651">
    <property type="entry name" value="BTB"/>
    <property type="match status" value="1"/>
</dbReference>
<dbReference type="SMART" id="SM00225">
    <property type="entry name" value="BTB"/>
    <property type="match status" value="1"/>
</dbReference>
<dbReference type="SMART" id="SM00355">
    <property type="entry name" value="ZnF_C2H2"/>
    <property type="match status" value="2"/>
</dbReference>
<dbReference type="SUPFAM" id="SSF57667">
    <property type="entry name" value="beta-beta-alpha zinc fingers"/>
    <property type="match status" value="1"/>
</dbReference>
<dbReference type="SUPFAM" id="SSF54695">
    <property type="entry name" value="POZ domain"/>
    <property type="match status" value="1"/>
</dbReference>
<dbReference type="PROSITE" id="PS50097">
    <property type="entry name" value="BTB"/>
    <property type="match status" value="1"/>
</dbReference>
<dbReference type="PROSITE" id="PS00028">
    <property type="entry name" value="ZINC_FINGER_C2H2_1"/>
    <property type="match status" value="1"/>
</dbReference>
<dbReference type="PROSITE" id="PS50157">
    <property type="entry name" value="ZINC_FINGER_C2H2_2"/>
    <property type="match status" value="1"/>
</dbReference>
<accession>Q8CDC7</accession>
<accession>Q3U3B2</accession>
<accession>Q9CYQ0</accession>
<protein>
    <recommendedName>
        <fullName>Zinc finger and BTB domain-containing protein 9</fullName>
    </recommendedName>
</protein>
<reference key="1">
    <citation type="journal article" date="2005" name="Science">
        <title>The transcriptional landscape of the mammalian genome.</title>
        <authorList>
            <person name="Carninci P."/>
            <person name="Kasukawa T."/>
            <person name="Katayama S."/>
            <person name="Gough J."/>
            <person name="Frith M.C."/>
            <person name="Maeda N."/>
            <person name="Oyama R."/>
            <person name="Ravasi T."/>
            <person name="Lenhard B."/>
            <person name="Wells C."/>
            <person name="Kodzius R."/>
            <person name="Shimokawa K."/>
            <person name="Bajic V.B."/>
            <person name="Brenner S.E."/>
            <person name="Batalov S."/>
            <person name="Forrest A.R."/>
            <person name="Zavolan M."/>
            <person name="Davis M.J."/>
            <person name="Wilming L.G."/>
            <person name="Aidinis V."/>
            <person name="Allen J.E."/>
            <person name="Ambesi-Impiombato A."/>
            <person name="Apweiler R."/>
            <person name="Aturaliya R.N."/>
            <person name="Bailey T.L."/>
            <person name="Bansal M."/>
            <person name="Baxter L."/>
            <person name="Beisel K.W."/>
            <person name="Bersano T."/>
            <person name="Bono H."/>
            <person name="Chalk A.M."/>
            <person name="Chiu K.P."/>
            <person name="Choudhary V."/>
            <person name="Christoffels A."/>
            <person name="Clutterbuck D.R."/>
            <person name="Crowe M.L."/>
            <person name="Dalla E."/>
            <person name="Dalrymple B.P."/>
            <person name="de Bono B."/>
            <person name="Della Gatta G."/>
            <person name="di Bernardo D."/>
            <person name="Down T."/>
            <person name="Engstrom P."/>
            <person name="Fagiolini M."/>
            <person name="Faulkner G."/>
            <person name="Fletcher C.F."/>
            <person name="Fukushima T."/>
            <person name="Furuno M."/>
            <person name="Futaki S."/>
            <person name="Gariboldi M."/>
            <person name="Georgii-Hemming P."/>
            <person name="Gingeras T.R."/>
            <person name="Gojobori T."/>
            <person name="Green R.E."/>
            <person name="Gustincich S."/>
            <person name="Harbers M."/>
            <person name="Hayashi Y."/>
            <person name="Hensch T.K."/>
            <person name="Hirokawa N."/>
            <person name="Hill D."/>
            <person name="Huminiecki L."/>
            <person name="Iacono M."/>
            <person name="Ikeo K."/>
            <person name="Iwama A."/>
            <person name="Ishikawa T."/>
            <person name="Jakt M."/>
            <person name="Kanapin A."/>
            <person name="Katoh M."/>
            <person name="Kawasawa Y."/>
            <person name="Kelso J."/>
            <person name="Kitamura H."/>
            <person name="Kitano H."/>
            <person name="Kollias G."/>
            <person name="Krishnan S.P."/>
            <person name="Kruger A."/>
            <person name="Kummerfeld S.K."/>
            <person name="Kurochkin I.V."/>
            <person name="Lareau L.F."/>
            <person name="Lazarevic D."/>
            <person name="Lipovich L."/>
            <person name="Liu J."/>
            <person name="Liuni S."/>
            <person name="McWilliam S."/>
            <person name="Madan Babu M."/>
            <person name="Madera M."/>
            <person name="Marchionni L."/>
            <person name="Matsuda H."/>
            <person name="Matsuzawa S."/>
            <person name="Miki H."/>
            <person name="Mignone F."/>
            <person name="Miyake S."/>
            <person name="Morris K."/>
            <person name="Mottagui-Tabar S."/>
            <person name="Mulder N."/>
            <person name="Nakano N."/>
            <person name="Nakauchi H."/>
            <person name="Ng P."/>
            <person name="Nilsson R."/>
            <person name="Nishiguchi S."/>
            <person name="Nishikawa S."/>
            <person name="Nori F."/>
            <person name="Ohara O."/>
            <person name="Okazaki Y."/>
            <person name="Orlando V."/>
            <person name="Pang K.C."/>
            <person name="Pavan W.J."/>
            <person name="Pavesi G."/>
            <person name="Pesole G."/>
            <person name="Petrovsky N."/>
            <person name="Piazza S."/>
            <person name="Reed J."/>
            <person name="Reid J.F."/>
            <person name="Ring B.Z."/>
            <person name="Ringwald M."/>
            <person name="Rost B."/>
            <person name="Ruan Y."/>
            <person name="Salzberg S.L."/>
            <person name="Sandelin A."/>
            <person name="Schneider C."/>
            <person name="Schoenbach C."/>
            <person name="Sekiguchi K."/>
            <person name="Semple C.A."/>
            <person name="Seno S."/>
            <person name="Sessa L."/>
            <person name="Sheng Y."/>
            <person name="Shibata Y."/>
            <person name="Shimada H."/>
            <person name="Shimada K."/>
            <person name="Silva D."/>
            <person name="Sinclair B."/>
            <person name="Sperling S."/>
            <person name="Stupka E."/>
            <person name="Sugiura K."/>
            <person name="Sultana R."/>
            <person name="Takenaka Y."/>
            <person name="Taki K."/>
            <person name="Tammoja K."/>
            <person name="Tan S.L."/>
            <person name="Tang S."/>
            <person name="Taylor M.S."/>
            <person name="Tegner J."/>
            <person name="Teichmann S.A."/>
            <person name="Ueda H.R."/>
            <person name="van Nimwegen E."/>
            <person name="Verardo R."/>
            <person name="Wei C.L."/>
            <person name="Yagi K."/>
            <person name="Yamanishi H."/>
            <person name="Zabarovsky E."/>
            <person name="Zhu S."/>
            <person name="Zimmer A."/>
            <person name="Hide W."/>
            <person name="Bult C."/>
            <person name="Grimmond S.M."/>
            <person name="Teasdale R.D."/>
            <person name="Liu E.T."/>
            <person name="Brusic V."/>
            <person name="Quackenbush J."/>
            <person name="Wahlestedt C."/>
            <person name="Mattick J.S."/>
            <person name="Hume D.A."/>
            <person name="Kai C."/>
            <person name="Sasaki D."/>
            <person name="Tomaru Y."/>
            <person name="Fukuda S."/>
            <person name="Kanamori-Katayama M."/>
            <person name="Suzuki M."/>
            <person name="Aoki J."/>
            <person name="Arakawa T."/>
            <person name="Iida J."/>
            <person name="Imamura K."/>
            <person name="Itoh M."/>
            <person name="Kato T."/>
            <person name="Kawaji H."/>
            <person name="Kawagashira N."/>
            <person name="Kawashima T."/>
            <person name="Kojima M."/>
            <person name="Kondo S."/>
            <person name="Konno H."/>
            <person name="Nakano K."/>
            <person name="Ninomiya N."/>
            <person name="Nishio T."/>
            <person name="Okada M."/>
            <person name="Plessy C."/>
            <person name="Shibata K."/>
            <person name="Shiraki T."/>
            <person name="Suzuki S."/>
            <person name="Tagami M."/>
            <person name="Waki K."/>
            <person name="Watahiki A."/>
            <person name="Okamura-Oho Y."/>
            <person name="Suzuki H."/>
            <person name="Kawai J."/>
            <person name="Hayashizaki Y."/>
        </authorList>
    </citation>
    <scope>NUCLEOTIDE SEQUENCE [LARGE SCALE MRNA]</scope>
    <source>
        <strain>C57BL/6J</strain>
        <strain>NOD</strain>
        <tissue>Testis</tissue>
    </source>
</reference>
<reference key="2">
    <citation type="journal article" date="2004" name="Genome Res.">
        <title>The status, quality, and expansion of the NIH full-length cDNA project: the Mammalian Gene Collection (MGC).</title>
        <authorList>
            <consortium name="The MGC Project Team"/>
        </authorList>
    </citation>
    <scope>NUCLEOTIDE SEQUENCE [LARGE SCALE MRNA]</scope>
    <source>
        <strain>C57BL/6J</strain>
        <strain>FVB/N</strain>
        <tissue>Brain</tissue>
        <tissue>Mammary tumor</tissue>
    </source>
</reference>
<proteinExistence type="evidence at transcript level"/>
<evidence type="ECO:0000250" key="1">
    <source>
        <dbReference type="UniProtKB" id="Q96C00"/>
    </source>
</evidence>
<evidence type="ECO:0000255" key="2">
    <source>
        <dbReference type="PROSITE-ProRule" id="PRU00037"/>
    </source>
</evidence>
<evidence type="ECO:0000255" key="3">
    <source>
        <dbReference type="PROSITE-ProRule" id="PRU00042"/>
    </source>
</evidence>
<evidence type="ECO:0000256" key="4">
    <source>
        <dbReference type="SAM" id="MobiDB-lite"/>
    </source>
</evidence>
<evidence type="ECO:0000305" key="5"/>
<name>ZBTB9_MOUSE</name>
<feature type="chain" id="PRO_0000047724" description="Zinc finger and BTB domain-containing protein 9">
    <location>
        <begin position="1"/>
        <end position="459"/>
    </location>
</feature>
<feature type="domain" description="BTB" evidence="2">
    <location>
        <begin position="48"/>
        <end position="112"/>
    </location>
</feature>
<feature type="zinc finger region" description="C2H2-type 1" evidence="3">
    <location>
        <begin position="397"/>
        <end position="419"/>
    </location>
</feature>
<feature type="zinc finger region" description="C2H2-type 2; atypical" evidence="3">
    <location>
        <begin position="424"/>
        <end position="446"/>
    </location>
</feature>
<feature type="region of interest" description="Disordered" evidence="4">
    <location>
        <begin position="178"/>
        <end position="200"/>
    </location>
</feature>
<feature type="region of interest" description="Disordered" evidence="4">
    <location>
        <begin position="212"/>
        <end position="274"/>
    </location>
</feature>
<feature type="region of interest" description="Disordered" evidence="4">
    <location>
        <begin position="293"/>
        <end position="356"/>
    </location>
</feature>
<feature type="compositionally biased region" description="Polar residues" evidence="4">
    <location>
        <begin position="178"/>
        <end position="189"/>
    </location>
</feature>
<feature type="cross-link" description="Glycyl lysine isopeptide (Lys-Gly) (interchain with G-Cter in SUMO2)" evidence="1">
    <location>
        <position position="285"/>
    </location>
</feature>
<feature type="cross-link" description="Glycyl lysine isopeptide (Lys-Gly) (interchain with G-Cter in SUMO2)" evidence="1">
    <location>
        <position position="293"/>
    </location>
</feature>
<feature type="cross-link" description="Glycyl lysine isopeptide (Lys-Gly) (interchain with G-Cter in SUMO2)" evidence="1">
    <location>
        <position position="368"/>
    </location>
</feature>
<feature type="sequence conflict" description="In Ref. 1; BAB29365." evidence="5" ref="1">
    <original>P</original>
    <variation>T</variation>
    <location>
        <position position="251"/>
    </location>
</feature>
<feature type="sequence conflict" description="In Ref. 1; BAB29365." evidence="5" ref="1">
    <original>A</original>
    <variation>V</variation>
    <location>
        <position position="425"/>
    </location>
</feature>
<organism>
    <name type="scientific">Mus musculus</name>
    <name type="common">Mouse</name>
    <dbReference type="NCBI Taxonomy" id="10090"/>
    <lineage>
        <taxon>Eukaryota</taxon>
        <taxon>Metazoa</taxon>
        <taxon>Chordata</taxon>
        <taxon>Craniata</taxon>
        <taxon>Vertebrata</taxon>
        <taxon>Euteleostomi</taxon>
        <taxon>Mammalia</taxon>
        <taxon>Eutheria</taxon>
        <taxon>Euarchontoglires</taxon>
        <taxon>Glires</taxon>
        <taxon>Rodentia</taxon>
        <taxon>Myomorpha</taxon>
        <taxon>Muroidea</taxon>
        <taxon>Muridae</taxon>
        <taxon>Murinae</taxon>
        <taxon>Mus</taxon>
        <taxon>Mus</taxon>
    </lineage>
</organism>
<sequence>MDASTPLPPASSSPRCNPAPQTIHIEFPHHSSSLLESLNRHRLEGKFCDVSLLVQGRELRAHKAVLAAASPYFHDKLLLGDAPRLTLPNVIEADAFEGLLQLIYSGSLHLPLDALPAHLLVASGLQMWQVVDRCSEILRELETSGGISAGGRASSLTLISTTSSGGWCIRSSPFQNPVRSSASTENSVLPESPAGGEGSELEGMLQIQVKVEEEEEQGSAAPLFQTPQPERVSGGVSQACGSHPLPTPALPSKPSEDESSTVDPPAPPVQASQILYVNQENVECKEEIARGTKEKTKVLSGEDSEEKEELRYLLSSGGGESSGAGDPSWKPVDLHGNEILSGDGGPGGTGQAMHGPVKLGGTPPADGKCFACLCGKRFAVKPKRDRHIMLTFSLRPFGCGICNKRFKLKHHLTEHMKTHARALHACPHCGRRFRVQAFFLRHRDLCKGQGWPTYHWTYK</sequence>